<protein>
    <recommendedName>
        <fullName>ATP-dependent RNA helicase dbp7</fullName>
        <ecNumber>3.6.4.13</ecNumber>
    </recommendedName>
</protein>
<reference key="1">
    <citation type="journal article" date="2008" name="PLoS Genet.">
        <title>Genomic islands in the pathogenic filamentous fungus Aspergillus fumigatus.</title>
        <authorList>
            <person name="Fedorova N.D."/>
            <person name="Khaldi N."/>
            <person name="Joardar V.S."/>
            <person name="Maiti R."/>
            <person name="Amedeo P."/>
            <person name="Anderson M.J."/>
            <person name="Crabtree J."/>
            <person name="Silva J.C."/>
            <person name="Badger J.H."/>
            <person name="Albarraq A."/>
            <person name="Angiuoli S."/>
            <person name="Bussey H."/>
            <person name="Bowyer P."/>
            <person name="Cotty P.J."/>
            <person name="Dyer P.S."/>
            <person name="Egan A."/>
            <person name="Galens K."/>
            <person name="Fraser-Liggett C.M."/>
            <person name="Haas B.J."/>
            <person name="Inman J.M."/>
            <person name="Kent R."/>
            <person name="Lemieux S."/>
            <person name="Malavazi I."/>
            <person name="Orvis J."/>
            <person name="Roemer T."/>
            <person name="Ronning C.M."/>
            <person name="Sundaram J.P."/>
            <person name="Sutton G."/>
            <person name="Turner G."/>
            <person name="Venter J.C."/>
            <person name="White O.R."/>
            <person name="Whitty B.R."/>
            <person name="Youngman P."/>
            <person name="Wolfe K.H."/>
            <person name="Goldman G.H."/>
            <person name="Wortman J.R."/>
            <person name="Jiang B."/>
            <person name="Denning D.W."/>
            <person name="Nierman W.C."/>
        </authorList>
    </citation>
    <scope>NUCLEOTIDE SEQUENCE [LARGE SCALE GENOMIC DNA]</scope>
    <source>
        <strain>ATCC 1007 / CBS 513.65 / DSM 816 / NCTC 3887 / NRRL 1 / QM 1276 / 107</strain>
    </source>
</reference>
<comment type="function">
    <text evidence="1">ATP-binding RNA helicase involved in the biogenesis of 60S ribosomal subunits and is required for the normal formation of 25S and 5.8S rRNAs.</text>
</comment>
<comment type="catalytic activity">
    <reaction>
        <text>ATP + H2O = ADP + phosphate + H(+)</text>
        <dbReference type="Rhea" id="RHEA:13065"/>
        <dbReference type="ChEBI" id="CHEBI:15377"/>
        <dbReference type="ChEBI" id="CHEBI:15378"/>
        <dbReference type="ChEBI" id="CHEBI:30616"/>
        <dbReference type="ChEBI" id="CHEBI:43474"/>
        <dbReference type="ChEBI" id="CHEBI:456216"/>
        <dbReference type="EC" id="3.6.4.13"/>
    </reaction>
</comment>
<comment type="subcellular location">
    <subcellularLocation>
        <location evidence="1">Nucleus</location>
        <location evidence="1">Nucleolus</location>
    </subcellularLocation>
</comment>
<comment type="domain">
    <text>The Q motif is unique to and characteristic of the DEAD box family of RNA helicases and controls ATP binding and hydrolysis.</text>
</comment>
<comment type="miscellaneous">
    <text>Present with 1460 molecules/cell in log phase SD medium.</text>
</comment>
<comment type="similarity">
    <text evidence="5">Belongs to the DEAD box helicase family. DDX31/DBP7 subfamily.</text>
</comment>
<accession>A1CB55</accession>
<evidence type="ECO:0000250" key="1"/>
<evidence type="ECO:0000255" key="2">
    <source>
        <dbReference type="PROSITE-ProRule" id="PRU00541"/>
    </source>
</evidence>
<evidence type="ECO:0000255" key="3">
    <source>
        <dbReference type="PROSITE-ProRule" id="PRU00542"/>
    </source>
</evidence>
<evidence type="ECO:0000256" key="4">
    <source>
        <dbReference type="SAM" id="MobiDB-lite"/>
    </source>
</evidence>
<evidence type="ECO:0000305" key="5"/>
<proteinExistence type="inferred from homology"/>
<dbReference type="EC" id="3.6.4.13"/>
<dbReference type="EMBL" id="DS027049">
    <property type="protein sequence ID" value="EAW12973.1"/>
    <property type="molecule type" value="Genomic_DNA"/>
</dbReference>
<dbReference type="RefSeq" id="XP_001274399.1">
    <property type="nucleotide sequence ID" value="XM_001274398.1"/>
</dbReference>
<dbReference type="SMR" id="A1CB55"/>
<dbReference type="STRING" id="344612.A1CB55"/>
<dbReference type="EnsemblFungi" id="EAW12973">
    <property type="protein sequence ID" value="EAW12973"/>
    <property type="gene ID" value="ACLA_014100"/>
</dbReference>
<dbReference type="GeneID" id="4706151"/>
<dbReference type="KEGG" id="act:ACLA_014100"/>
<dbReference type="VEuPathDB" id="FungiDB:ACLA_014100"/>
<dbReference type="eggNOG" id="KOG0348">
    <property type="taxonomic scope" value="Eukaryota"/>
</dbReference>
<dbReference type="HOGENOM" id="CLU_003041_26_2_1"/>
<dbReference type="OMA" id="AVHIKAD"/>
<dbReference type="OrthoDB" id="422663at2759"/>
<dbReference type="Proteomes" id="UP000006701">
    <property type="component" value="Unassembled WGS sequence"/>
</dbReference>
<dbReference type="GO" id="GO:0005730">
    <property type="term" value="C:nucleolus"/>
    <property type="evidence" value="ECO:0007669"/>
    <property type="project" value="UniProtKB-SubCell"/>
</dbReference>
<dbReference type="GO" id="GO:0005524">
    <property type="term" value="F:ATP binding"/>
    <property type="evidence" value="ECO:0007669"/>
    <property type="project" value="UniProtKB-KW"/>
</dbReference>
<dbReference type="GO" id="GO:0016887">
    <property type="term" value="F:ATP hydrolysis activity"/>
    <property type="evidence" value="ECO:0007669"/>
    <property type="project" value="RHEA"/>
</dbReference>
<dbReference type="GO" id="GO:0003723">
    <property type="term" value="F:RNA binding"/>
    <property type="evidence" value="ECO:0007669"/>
    <property type="project" value="UniProtKB-KW"/>
</dbReference>
<dbReference type="GO" id="GO:0003724">
    <property type="term" value="F:RNA helicase activity"/>
    <property type="evidence" value="ECO:0007669"/>
    <property type="project" value="UniProtKB-EC"/>
</dbReference>
<dbReference type="GO" id="GO:0000464">
    <property type="term" value="P:endonucleolytic cleavage in ITS1 upstream of 5.8S rRNA from tricistronic rRNA transcript (SSU-rRNA, 5.8S rRNA, LSU-rRNA)"/>
    <property type="evidence" value="ECO:0007669"/>
    <property type="project" value="EnsemblFungi"/>
</dbReference>
<dbReference type="CDD" id="cd17949">
    <property type="entry name" value="DEADc_DDX31"/>
    <property type="match status" value="1"/>
</dbReference>
<dbReference type="CDD" id="cd18787">
    <property type="entry name" value="SF2_C_DEAD"/>
    <property type="match status" value="1"/>
</dbReference>
<dbReference type="Gene3D" id="3.40.50.300">
    <property type="entry name" value="P-loop containing nucleotide triphosphate hydrolases"/>
    <property type="match status" value="2"/>
</dbReference>
<dbReference type="InterPro" id="IPR011545">
    <property type="entry name" value="DEAD/DEAH_box_helicase_dom"/>
</dbReference>
<dbReference type="InterPro" id="IPR014001">
    <property type="entry name" value="Helicase_ATP-bd"/>
</dbReference>
<dbReference type="InterPro" id="IPR001650">
    <property type="entry name" value="Helicase_C-like"/>
</dbReference>
<dbReference type="InterPro" id="IPR027417">
    <property type="entry name" value="P-loop_NTPase"/>
</dbReference>
<dbReference type="InterPro" id="IPR025313">
    <property type="entry name" value="SPB4-like_CTE"/>
</dbReference>
<dbReference type="PANTHER" id="PTHR24031">
    <property type="entry name" value="RNA HELICASE"/>
    <property type="match status" value="1"/>
</dbReference>
<dbReference type="Pfam" id="PF13959">
    <property type="entry name" value="CTE_SPB4"/>
    <property type="match status" value="1"/>
</dbReference>
<dbReference type="Pfam" id="PF00270">
    <property type="entry name" value="DEAD"/>
    <property type="match status" value="1"/>
</dbReference>
<dbReference type="Pfam" id="PF00271">
    <property type="entry name" value="Helicase_C"/>
    <property type="match status" value="1"/>
</dbReference>
<dbReference type="SMART" id="SM00487">
    <property type="entry name" value="DEXDc"/>
    <property type="match status" value="1"/>
</dbReference>
<dbReference type="SMART" id="SM01178">
    <property type="entry name" value="DUF4217"/>
    <property type="match status" value="1"/>
</dbReference>
<dbReference type="SMART" id="SM00490">
    <property type="entry name" value="HELICc"/>
    <property type="match status" value="1"/>
</dbReference>
<dbReference type="SUPFAM" id="SSF52540">
    <property type="entry name" value="P-loop containing nucleoside triphosphate hydrolases"/>
    <property type="match status" value="1"/>
</dbReference>
<dbReference type="PROSITE" id="PS51192">
    <property type="entry name" value="HELICASE_ATP_BIND_1"/>
    <property type="match status" value="1"/>
</dbReference>
<dbReference type="PROSITE" id="PS51194">
    <property type="entry name" value="HELICASE_CTER"/>
    <property type="match status" value="1"/>
</dbReference>
<dbReference type="PROSITE" id="PS51195">
    <property type="entry name" value="Q_MOTIF"/>
    <property type="match status" value="1"/>
</dbReference>
<keyword id="KW-0067">ATP-binding</keyword>
<keyword id="KW-0347">Helicase</keyword>
<keyword id="KW-0378">Hydrolase</keyword>
<keyword id="KW-0547">Nucleotide-binding</keyword>
<keyword id="KW-0539">Nucleus</keyword>
<keyword id="KW-1185">Reference proteome</keyword>
<keyword id="KW-0690">Ribosome biogenesis</keyword>
<keyword id="KW-0694">RNA-binding</keyword>
<keyword id="KW-0698">rRNA processing</keyword>
<organism>
    <name type="scientific">Aspergillus clavatus (strain ATCC 1007 / CBS 513.65 / DSM 816 / NCTC 3887 / NRRL 1 / QM 1276 / 107)</name>
    <dbReference type="NCBI Taxonomy" id="344612"/>
    <lineage>
        <taxon>Eukaryota</taxon>
        <taxon>Fungi</taxon>
        <taxon>Dikarya</taxon>
        <taxon>Ascomycota</taxon>
        <taxon>Pezizomycotina</taxon>
        <taxon>Eurotiomycetes</taxon>
        <taxon>Eurotiomycetidae</taxon>
        <taxon>Eurotiales</taxon>
        <taxon>Aspergillaceae</taxon>
        <taxon>Aspergillus</taxon>
        <taxon>Aspergillus subgen. Fumigati</taxon>
    </lineage>
</organism>
<name>DBP7_ASPCL</name>
<sequence length="755" mass="83445">MADDGLLLNFSLGDSNVIKAEPKLKGGTWRDRLSARKIAQHRSKGPRKPGDENTAPRVPRNPNQIEVSATRPQKRQRTDGGDGGRPQSHAQSNQPRQFISSLFTKNPEPKNVEEVKEEGPVEEAKPTNAPLIDGLDTFTNLGLSPSLAAHLLTKLELKAPTAIQKASISQLLKEDGDAFIQAETGSGKTLAYLLPLVQRIMTLSKPTTDATGQPIVHRDSGLFAIVLAPTRELCKQISVVLESLLRCAHWIVAGTVIGGEKKKSEKARLRKGLNILVATPGRLADHLENTKVLDVSNVRWLVLDEGDRLMELGFEEEIQGIVKKLDARQRPSRIPGIPTKRTTVLCSATMKMNVQKLGEISLKDAVHIKADPEDEDEKARLANKEEDSAYRVPAQLKQSYAVVAAKLRLVTLTAYLKRTFMRKGSVMKTIVFVSCADSVDFHFEVFTRKKQQTDDADASDEEKTEEKPLSPHGTIAPATAFSNPSNPVTLYRLHGSLPQNVRTSTLASFAKNREPSVLICTDVASRGLDLPNVDLVVEYDPAFSAEDHLHRIGRTARVGRDGRALVFLMPGCEENYVEILKRGYRDGGKALTRVDANDILKRGFGGNVEAGKKDWDVKATDWQCEVERWSLENPQYLEMARRAFQSHIRAYATHIAAERSMFNIKELHLGHLAKAFALRDRPSKINVPGLRQGKEETKKDFKAERRPAAGQKRKADGADMGDSKSSSSHDTATSAQKMRAKMKEHMAGASEFNLA</sequence>
<gene>
    <name type="primary">dbp7</name>
    <name type="ORF">ACLA_014100</name>
</gene>
<feature type="chain" id="PRO_0000281706" description="ATP-dependent RNA helicase dbp7">
    <location>
        <begin position="1"/>
        <end position="755"/>
    </location>
</feature>
<feature type="domain" description="Helicase ATP-binding" evidence="2">
    <location>
        <begin position="169"/>
        <end position="368"/>
    </location>
</feature>
<feature type="domain" description="Helicase C-terminal" evidence="3">
    <location>
        <begin position="395"/>
        <end position="600"/>
    </location>
</feature>
<feature type="region of interest" description="Disordered" evidence="4">
    <location>
        <begin position="28"/>
        <end position="128"/>
    </location>
</feature>
<feature type="region of interest" description="Disordered" evidence="4">
    <location>
        <begin position="452"/>
        <end position="481"/>
    </location>
</feature>
<feature type="region of interest" description="Disordered" evidence="4">
    <location>
        <begin position="685"/>
        <end position="755"/>
    </location>
</feature>
<feature type="short sequence motif" description="Q motif">
    <location>
        <begin position="136"/>
        <end position="165"/>
    </location>
</feature>
<feature type="short sequence motif" description="DEAD box">
    <location>
        <begin position="304"/>
        <end position="307"/>
    </location>
</feature>
<feature type="compositionally biased region" description="Basic residues" evidence="4">
    <location>
        <begin position="38"/>
        <end position="47"/>
    </location>
</feature>
<feature type="compositionally biased region" description="Polar residues" evidence="4">
    <location>
        <begin position="61"/>
        <end position="71"/>
    </location>
</feature>
<feature type="compositionally biased region" description="Polar residues" evidence="4">
    <location>
        <begin position="88"/>
        <end position="104"/>
    </location>
</feature>
<feature type="compositionally biased region" description="Basic and acidic residues" evidence="4">
    <location>
        <begin position="107"/>
        <end position="125"/>
    </location>
</feature>
<feature type="compositionally biased region" description="Acidic residues" evidence="4">
    <location>
        <begin position="454"/>
        <end position="463"/>
    </location>
</feature>
<feature type="compositionally biased region" description="Basic and acidic residues" evidence="4">
    <location>
        <begin position="692"/>
        <end position="717"/>
    </location>
</feature>
<feature type="compositionally biased region" description="Low complexity" evidence="4">
    <location>
        <begin position="718"/>
        <end position="735"/>
    </location>
</feature>
<feature type="binding site" evidence="2">
    <location>
        <begin position="182"/>
        <end position="189"/>
    </location>
    <ligand>
        <name>ATP</name>
        <dbReference type="ChEBI" id="CHEBI:30616"/>
    </ligand>
</feature>